<comment type="function">
    <text evidence="1">Acts as a chaperone.</text>
</comment>
<comment type="induction">
    <text evidence="1">By stress conditions e.g. heat shock.</text>
</comment>
<comment type="similarity">
    <text evidence="1">Belongs to the heat shock protein 70 family.</text>
</comment>
<dbReference type="EMBL" id="AM295007">
    <property type="protein sequence ID" value="CAM29689.1"/>
    <property type="molecule type" value="Genomic_DNA"/>
</dbReference>
<dbReference type="RefSeq" id="WP_010922599.1">
    <property type="nucleotide sequence ID" value="NC_009332.1"/>
</dbReference>
<dbReference type="SMR" id="A2RCW6"/>
<dbReference type="KEGG" id="spf:SpyM50347"/>
<dbReference type="HOGENOM" id="CLU_005965_2_4_9"/>
<dbReference type="GO" id="GO:0005524">
    <property type="term" value="F:ATP binding"/>
    <property type="evidence" value="ECO:0007669"/>
    <property type="project" value="UniProtKB-UniRule"/>
</dbReference>
<dbReference type="GO" id="GO:0140662">
    <property type="term" value="F:ATP-dependent protein folding chaperone"/>
    <property type="evidence" value="ECO:0007669"/>
    <property type="project" value="InterPro"/>
</dbReference>
<dbReference type="GO" id="GO:0051082">
    <property type="term" value="F:unfolded protein binding"/>
    <property type="evidence" value="ECO:0007669"/>
    <property type="project" value="InterPro"/>
</dbReference>
<dbReference type="CDD" id="cd10234">
    <property type="entry name" value="ASKHA_NBD_HSP70_DnaK-like"/>
    <property type="match status" value="1"/>
</dbReference>
<dbReference type="FunFam" id="2.60.34.10:FF:000014">
    <property type="entry name" value="Chaperone protein DnaK HSP70"/>
    <property type="match status" value="1"/>
</dbReference>
<dbReference type="FunFam" id="3.30.420.40:FF:000071">
    <property type="entry name" value="Molecular chaperone DnaK"/>
    <property type="match status" value="1"/>
</dbReference>
<dbReference type="FunFam" id="3.90.640.10:FF:000003">
    <property type="entry name" value="Molecular chaperone DnaK"/>
    <property type="match status" value="1"/>
</dbReference>
<dbReference type="Gene3D" id="1.20.1270.10">
    <property type="match status" value="1"/>
</dbReference>
<dbReference type="Gene3D" id="3.30.420.40">
    <property type="match status" value="2"/>
</dbReference>
<dbReference type="Gene3D" id="3.90.640.10">
    <property type="entry name" value="Actin, Chain A, domain 4"/>
    <property type="match status" value="1"/>
</dbReference>
<dbReference type="Gene3D" id="2.60.34.10">
    <property type="entry name" value="Substrate Binding Domain Of DNAk, Chain A, domain 1"/>
    <property type="match status" value="1"/>
</dbReference>
<dbReference type="HAMAP" id="MF_00332">
    <property type="entry name" value="DnaK"/>
    <property type="match status" value="1"/>
</dbReference>
<dbReference type="InterPro" id="IPR043129">
    <property type="entry name" value="ATPase_NBD"/>
</dbReference>
<dbReference type="InterPro" id="IPR012725">
    <property type="entry name" value="Chaperone_DnaK"/>
</dbReference>
<dbReference type="InterPro" id="IPR018181">
    <property type="entry name" value="Heat_shock_70_CS"/>
</dbReference>
<dbReference type="InterPro" id="IPR029048">
    <property type="entry name" value="HSP70_C_sf"/>
</dbReference>
<dbReference type="InterPro" id="IPR029047">
    <property type="entry name" value="HSP70_peptide-bd_sf"/>
</dbReference>
<dbReference type="InterPro" id="IPR013126">
    <property type="entry name" value="Hsp_70_fam"/>
</dbReference>
<dbReference type="NCBIfam" id="NF001413">
    <property type="entry name" value="PRK00290.1"/>
    <property type="match status" value="1"/>
</dbReference>
<dbReference type="NCBIfam" id="TIGR02350">
    <property type="entry name" value="prok_dnaK"/>
    <property type="match status" value="1"/>
</dbReference>
<dbReference type="PANTHER" id="PTHR19375">
    <property type="entry name" value="HEAT SHOCK PROTEIN 70KDA"/>
    <property type="match status" value="1"/>
</dbReference>
<dbReference type="Pfam" id="PF00012">
    <property type="entry name" value="HSP70"/>
    <property type="match status" value="1"/>
</dbReference>
<dbReference type="PRINTS" id="PR00301">
    <property type="entry name" value="HEATSHOCK70"/>
</dbReference>
<dbReference type="SUPFAM" id="SSF53067">
    <property type="entry name" value="Actin-like ATPase domain"/>
    <property type="match status" value="2"/>
</dbReference>
<dbReference type="SUPFAM" id="SSF100934">
    <property type="entry name" value="Heat shock protein 70kD (HSP70), C-terminal subdomain"/>
    <property type="match status" value="1"/>
</dbReference>
<dbReference type="SUPFAM" id="SSF100920">
    <property type="entry name" value="Heat shock protein 70kD (HSP70), peptide-binding domain"/>
    <property type="match status" value="1"/>
</dbReference>
<dbReference type="PROSITE" id="PS00297">
    <property type="entry name" value="HSP70_1"/>
    <property type="match status" value="1"/>
</dbReference>
<dbReference type="PROSITE" id="PS00329">
    <property type="entry name" value="HSP70_2"/>
    <property type="match status" value="1"/>
</dbReference>
<dbReference type="PROSITE" id="PS01036">
    <property type="entry name" value="HSP70_3"/>
    <property type="match status" value="1"/>
</dbReference>
<feature type="chain" id="PRO_1000059684" description="Chaperone protein DnaK">
    <location>
        <begin position="1"/>
        <end position="608"/>
    </location>
</feature>
<feature type="region of interest" description="Disordered" evidence="2">
    <location>
        <begin position="578"/>
        <end position="608"/>
    </location>
</feature>
<feature type="compositionally biased region" description="Low complexity" evidence="2">
    <location>
        <begin position="578"/>
        <end position="598"/>
    </location>
</feature>
<feature type="compositionally biased region" description="Acidic residues" evidence="2">
    <location>
        <begin position="599"/>
        <end position="608"/>
    </location>
</feature>
<feature type="modified residue" description="Phosphothreonine; by autocatalysis" evidence="1">
    <location>
        <position position="173"/>
    </location>
</feature>
<reference key="1">
    <citation type="journal article" date="2007" name="J. Bacteriol.">
        <title>Complete genome of acute rheumatic fever-associated serotype M5 Streptococcus pyogenes strain Manfredo.</title>
        <authorList>
            <person name="Holden M.T.G."/>
            <person name="Scott A."/>
            <person name="Cherevach I."/>
            <person name="Chillingworth T."/>
            <person name="Churcher C."/>
            <person name="Cronin A."/>
            <person name="Dowd L."/>
            <person name="Feltwell T."/>
            <person name="Hamlin N."/>
            <person name="Holroyd S."/>
            <person name="Jagels K."/>
            <person name="Moule S."/>
            <person name="Mungall K."/>
            <person name="Quail M.A."/>
            <person name="Price C."/>
            <person name="Rabbinowitsch E."/>
            <person name="Sharp S."/>
            <person name="Skelton J."/>
            <person name="Whitehead S."/>
            <person name="Barrell B.G."/>
            <person name="Kehoe M."/>
            <person name="Parkhill J."/>
        </authorList>
    </citation>
    <scope>NUCLEOTIDE SEQUENCE [LARGE SCALE GENOMIC DNA]</scope>
    <source>
        <strain>Manfredo</strain>
    </source>
</reference>
<protein>
    <recommendedName>
        <fullName evidence="1">Chaperone protein DnaK</fullName>
    </recommendedName>
    <alternativeName>
        <fullName evidence="1">HSP70</fullName>
    </alternativeName>
    <alternativeName>
        <fullName evidence="1">Heat shock 70 kDa protein</fullName>
    </alternativeName>
    <alternativeName>
        <fullName evidence="1">Heat shock protein 70</fullName>
    </alternativeName>
</protein>
<gene>
    <name evidence="1" type="primary">dnaK</name>
    <name type="ordered locus">SpyM50347</name>
</gene>
<name>DNAK_STRPG</name>
<accession>A2RCW6</accession>
<proteinExistence type="inferred from homology"/>
<evidence type="ECO:0000255" key="1">
    <source>
        <dbReference type="HAMAP-Rule" id="MF_00332"/>
    </source>
</evidence>
<evidence type="ECO:0000256" key="2">
    <source>
        <dbReference type="SAM" id="MobiDB-lite"/>
    </source>
</evidence>
<keyword id="KW-0067">ATP-binding</keyword>
<keyword id="KW-0143">Chaperone</keyword>
<keyword id="KW-0547">Nucleotide-binding</keyword>
<keyword id="KW-0597">Phosphoprotein</keyword>
<keyword id="KW-0346">Stress response</keyword>
<sequence length="608" mass="64920">MSKIIGIDLGTTNSAVAVLEGTESKIIANPEGNRTTPSVVSFKNGEIIVGDAAKRQAVTNPETVISIKSKMGTSEKVSANGKEYTPQEISAMILQYLKGYAEDYLGEKVEKAVITVPAYFNDAQRQATKDAGKIAGLEVERIVNEPTAAALAYGMDKTDKDEKILVFDLGGGTFDVSILELGDGVFDVLATAGDNKLGGDDFDQKIIDFLVAEFKKENGIDLSQDKMALQRLKDAAEKAKKDLSGVTQTQISLPFITAGSAGPLHLEMSLSRAKFDDLTRDLVERTKTPVRQALSDAGLSLSEIDEVILVGGSTRIPAVVEAVKAETGKEPNKSVNPDEVVAMGAAIQGGVITGDVKDVVLLDVTPLSLGIETMGGVFTKLIDRNTTIPTSKSQVFSTAADNQPAVDIHVLQGERPMAADNKTLGRFQLTDIPAAPRGIPQIEVTFDIDKNGIVSVKAKDLGTQKEQHIVIKSNDGLSEEEIDRMMKDAEANAEADAKRKEEVDLKNEVDQAIFATEKTIKETEGKGFDTERDAAQSALDELKAAQESGNLDDMKAKLEALNEKAQALAVKMYEQAAAAQQAAQGAEGAQANDSANNDDVVDGEFTEK</sequence>
<organism>
    <name type="scientific">Streptococcus pyogenes serotype M5 (strain Manfredo)</name>
    <dbReference type="NCBI Taxonomy" id="160491"/>
    <lineage>
        <taxon>Bacteria</taxon>
        <taxon>Bacillati</taxon>
        <taxon>Bacillota</taxon>
        <taxon>Bacilli</taxon>
        <taxon>Lactobacillales</taxon>
        <taxon>Streptococcaceae</taxon>
        <taxon>Streptococcus</taxon>
    </lineage>
</organism>